<proteinExistence type="evidence at protein level"/>
<protein>
    <recommendedName>
        <fullName>G protein-activated inward rectifier potassium channel 4</fullName>
        <shortName>GIRK-4</shortName>
    </recommendedName>
    <alternativeName>
        <fullName>Cardiac inward rectifier</fullName>
    </alternativeName>
    <alternativeName>
        <fullName>Heart KATP channel</fullName>
    </alternativeName>
    <alternativeName>
        <fullName>Inward rectifier K(+) channel Kir3.4</fullName>
    </alternativeName>
    <alternativeName>
        <fullName>KATP-1</fullName>
    </alternativeName>
    <alternativeName>
        <fullName>Potassium channel, inwardly rectifying subfamily J member 5</fullName>
    </alternativeName>
</protein>
<dbReference type="EMBL" id="DAAA02063265">
    <property type="status" value="NOT_ANNOTATED_CDS"/>
    <property type="molecule type" value="Genomic_DNA"/>
</dbReference>
<dbReference type="RefSeq" id="XP_002699270.1">
    <property type="nucleotide sequence ID" value="XM_002699224.6"/>
</dbReference>
<dbReference type="RefSeq" id="XP_005197363.1">
    <property type="nucleotide sequence ID" value="XM_005197306.3"/>
</dbReference>
<dbReference type="RefSeq" id="XP_005197364.1">
    <property type="nucleotide sequence ID" value="XM_005197307.3"/>
</dbReference>
<dbReference type="RefSeq" id="XP_005226885.1">
    <property type="nucleotide sequence ID" value="XM_005226828.5"/>
</dbReference>
<dbReference type="RefSeq" id="XP_010819266.1">
    <property type="nucleotide sequence ID" value="XM_010820964.4"/>
</dbReference>
<dbReference type="RefSeq" id="XP_010824575.1">
    <property type="nucleotide sequence ID" value="XM_010826273.2"/>
</dbReference>
<dbReference type="SMR" id="F1MYR9"/>
<dbReference type="ComplexPortal" id="CPX-3275">
    <property type="entry name" value="I(KACh) inward rectifier potassium channel complex"/>
</dbReference>
<dbReference type="FunCoup" id="F1MYR9">
    <property type="interactions" value="230"/>
</dbReference>
<dbReference type="IntAct" id="F1MYR9">
    <property type="interactions" value="1"/>
</dbReference>
<dbReference type="STRING" id="9913.ENSBTAP00000073898"/>
<dbReference type="PaxDb" id="9913-ENSBTAP00000009059"/>
<dbReference type="Ensembl" id="ENSBTAT00000079814.2">
    <property type="protein sequence ID" value="ENSBTAP00000073898.1"/>
    <property type="gene ID" value="ENSBTAG00000006902.6"/>
</dbReference>
<dbReference type="GeneID" id="539844"/>
<dbReference type="KEGG" id="bta:539844"/>
<dbReference type="CTD" id="3762"/>
<dbReference type="VEuPathDB" id="HostDB:ENSBTAG00000006902"/>
<dbReference type="VGNC" id="VGNC:30462">
    <property type="gene designation" value="KCNJ5"/>
</dbReference>
<dbReference type="eggNOG" id="KOG3827">
    <property type="taxonomic scope" value="Eukaryota"/>
</dbReference>
<dbReference type="GeneTree" id="ENSGT01080000257365"/>
<dbReference type="HOGENOM" id="CLU_022738_11_0_1"/>
<dbReference type="InParanoid" id="F1MYR9"/>
<dbReference type="OMA" id="ISMRDDK"/>
<dbReference type="OrthoDB" id="273257at2759"/>
<dbReference type="TreeFam" id="TF313676"/>
<dbReference type="Reactome" id="R-BTA-1296041">
    <property type="pathway name" value="Activation of G protein gated Potassium channels"/>
</dbReference>
<dbReference type="Reactome" id="R-BTA-997272">
    <property type="pathway name" value="Inhibition of voltage gated Ca2+ channels via Gbeta/gamma subunits"/>
</dbReference>
<dbReference type="Proteomes" id="UP000009136">
    <property type="component" value="Chromosome 29"/>
</dbReference>
<dbReference type="Bgee" id="ENSBTAG00000006902">
    <property type="expression patterns" value="Expressed in cardiac atrium and 25 other cell types or tissues"/>
</dbReference>
<dbReference type="GO" id="GO:1990566">
    <property type="term" value="C:I(KACh) inward rectifier potassium channel complex"/>
    <property type="evidence" value="ECO:0000353"/>
    <property type="project" value="ComplexPortal"/>
</dbReference>
<dbReference type="GO" id="GO:0005886">
    <property type="term" value="C:plasma membrane"/>
    <property type="evidence" value="ECO:0000318"/>
    <property type="project" value="GO_Central"/>
</dbReference>
<dbReference type="GO" id="GO:0015467">
    <property type="term" value="F:G-protein activated inward rectifier potassium channel activity"/>
    <property type="evidence" value="ECO:0000250"/>
    <property type="project" value="UniProtKB"/>
</dbReference>
<dbReference type="GO" id="GO:0005242">
    <property type="term" value="F:inward rectifier potassium channel activity"/>
    <property type="evidence" value="ECO:0000250"/>
    <property type="project" value="UniProtKB"/>
</dbReference>
<dbReference type="GO" id="GO:0086089">
    <property type="term" value="F:voltage-gated potassium channel activity involved in atrial cardiac muscle cell action potential repolarization"/>
    <property type="evidence" value="ECO:0007669"/>
    <property type="project" value="Ensembl"/>
</dbReference>
<dbReference type="GO" id="GO:0098914">
    <property type="term" value="P:membrane repolarization during atrial cardiac muscle cell action potential"/>
    <property type="evidence" value="ECO:0007669"/>
    <property type="project" value="Ensembl"/>
</dbReference>
<dbReference type="GO" id="GO:1990573">
    <property type="term" value="P:potassium ion import across plasma membrane"/>
    <property type="evidence" value="ECO:0000318"/>
    <property type="project" value="GO_Central"/>
</dbReference>
<dbReference type="GO" id="GO:0071805">
    <property type="term" value="P:potassium ion transmembrane transport"/>
    <property type="evidence" value="ECO:0000303"/>
    <property type="project" value="ComplexPortal"/>
</dbReference>
<dbReference type="GO" id="GO:0086091">
    <property type="term" value="P:regulation of heart rate by cardiac conduction"/>
    <property type="evidence" value="ECO:0007669"/>
    <property type="project" value="Ensembl"/>
</dbReference>
<dbReference type="GO" id="GO:0034765">
    <property type="term" value="P:regulation of monoatomic ion transmembrane transport"/>
    <property type="evidence" value="ECO:0000318"/>
    <property type="project" value="GO_Central"/>
</dbReference>
<dbReference type="FunFam" id="1.10.287.70:FF:000019">
    <property type="entry name" value="G protein-activated inward rectifier potassium channel 1"/>
    <property type="match status" value="1"/>
</dbReference>
<dbReference type="FunFam" id="2.60.40.1400:FF:000005">
    <property type="entry name" value="G protein-activated inward rectifier potassium channel 2"/>
    <property type="match status" value="1"/>
</dbReference>
<dbReference type="Gene3D" id="1.10.287.70">
    <property type="match status" value="1"/>
</dbReference>
<dbReference type="Gene3D" id="2.60.40.1400">
    <property type="entry name" value="G protein-activated inward rectifier potassium channel 1"/>
    <property type="match status" value="1"/>
</dbReference>
<dbReference type="InterPro" id="IPR014756">
    <property type="entry name" value="Ig_E-set"/>
</dbReference>
<dbReference type="InterPro" id="IPR041647">
    <property type="entry name" value="IRK_C"/>
</dbReference>
<dbReference type="InterPro" id="IPR016449">
    <property type="entry name" value="K_chnl_inward-rec_Kir"/>
</dbReference>
<dbReference type="InterPro" id="IPR003277">
    <property type="entry name" value="K_chnl_inward-rec_Kir3.4"/>
</dbReference>
<dbReference type="InterPro" id="IPR013518">
    <property type="entry name" value="K_chnl_inward-rec_Kir_cyto"/>
</dbReference>
<dbReference type="InterPro" id="IPR040445">
    <property type="entry name" value="Kir_TM"/>
</dbReference>
<dbReference type="PANTHER" id="PTHR11767:SF52">
    <property type="entry name" value="G PROTEIN-ACTIVATED INWARD RECTIFIER POTASSIUM CHANNEL 4"/>
    <property type="match status" value="1"/>
</dbReference>
<dbReference type="PANTHER" id="PTHR11767">
    <property type="entry name" value="INWARD RECTIFIER POTASSIUM CHANNEL"/>
    <property type="match status" value="1"/>
</dbReference>
<dbReference type="Pfam" id="PF01007">
    <property type="entry name" value="IRK"/>
    <property type="match status" value="1"/>
</dbReference>
<dbReference type="Pfam" id="PF17655">
    <property type="entry name" value="IRK_C"/>
    <property type="match status" value="1"/>
</dbReference>
<dbReference type="PIRSF" id="PIRSF005465">
    <property type="entry name" value="GIRK_kir"/>
    <property type="match status" value="1"/>
</dbReference>
<dbReference type="PRINTS" id="PR01330">
    <property type="entry name" value="KIR34CHANNEL"/>
</dbReference>
<dbReference type="PRINTS" id="PR01320">
    <property type="entry name" value="KIRCHANNEL"/>
</dbReference>
<dbReference type="SUPFAM" id="SSF81296">
    <property type="entry name" value="E set domains"/>
    <property type="match status" value="1"/>
</dbReference>
<dbReference type="SUPFAM" id="SSF81324">
    <property type="entry name" value="Voltage-gated potassium channels"/>
    <property type="match status" value="1"/>
</dbReference>
<organism>
    <name type="scientific">Bos taurus</name>
    <name type="common">Bovine</name>
    <dbReference type="NCBI Taxonomy" id="9913"/>
    <lineage>
        <taxon>Eukaryota</taxon>
        <taxon>Metazoa</taxon>
        <taxon>Chordata</taxon>
        <taxon>Craniata</taxon>
        <taxon>Vertebrata</taxon>
        <taxon>Euteleostomi</taxon>
        <taxon>Mammalia</taxon>
        <taxon>Eutheria</taxon>
        <taxon>Laurasiatheria</taxon>
        <taxon>Artiodactyla</taxon>
        <taxon>Ruminantia</taxon>
        <taxon>Pecora</taxon>
        <taxon>Bovidae</taxon>
        <taxon>Bovinae</taxon>
        <taxon>Bos</taxon>
    </lineage>
</organism>
<feature type="chain" id="PRO_0000431726" description="G protein-activated inward rectifier potassium channel 4">
    <location>
        <begin position="1"/>
        <end position="419"/>
    </location>
</feature>
<feature type="topological domain" description="Cytoplasmic" evidence="1">
    <location>
        <begin position="1"/>
        <end position="86"/>
    </location>
</feature>
<feature type="transmembrane region" description="Helical; Name=M1" evidence="1">
    <location>
        <begin position="87"/>
        <end position="111"/>
    </location>
</feature>
<feature type="topological domain" description="Extracellular" evidence="1">
    <location>
        <begin position="112"/>
        <end position="135"/>
    </location>
</feature>
<feature type="intramembrane region" description="Helical; Pore-forming; Name=H5" evidence="1">
    <location>
        <begin position="136"/>
        <end position="147"/>
    </location>
</feature>
<feature type="intramembrane region" description="Pore-forming" evidence="1">
    <location>
        <begin position="148"/>
        <end position="154"/>
    </location>
</feature>
<feature type="topological domain" description="Extracellular" evidence="1">
    <location>
        <begin position="155"/>
        <end position="163"/>
    </location>
</feature>
<feature type="transmembrane region" description="Helical; Name=M2" evidence="1">
    <location>
        <begin position="164"/>
        <end position="185"/>
    </location>
</feature>
<feature type="topological domain" description="Cytoplasmic" evidence="1">
    <location>
        <begin position="186"/>
        <end position="419"/>
    </location>
</feature>
<feature type="region of interest" description="Disordered" evidence="5">
    <location>
        <begin position="1"/>
        <end position="24"/>
    </location>
</feature>
<feature type="region of interest" description="Disordered" evidence="5">
    <location>
        <begin position="381"/>
        <end position="419"/>
    </location>
</feature>
<feature type="short sequence motif" description="Selectivity filter" evidence="1">
    <location>
        <begin position="149"/>
        <end position="154"/>
    </location>
</feature>
<feature type="compositionally biased region" description="Acidic residues" evidence="5">
    <location>
        <begin position="396"/>
        <end position="407"/>
    </location>
</feature>
<feature type="site" description="Role in the control of polyamine-mediated channel gating and in the blocking by intracellular magnesium" evidence="1">
    <location>
        <position position="179"/>
    </location>
</feature>
<feature type="modified residue" description="Phosphoserine" evidence="2">
    <location>
        <position position="5"/>
    </location>
</feature>
<name>KCNJ5_BOVIN</name>
<reference key="1">
    <citation type="journal article" date="2009" name="Genome Biol.">
        <title>A whole-genome assembly of the domestic cow, Bos taurus.</title>
        <authorList>
            <person name="Zimin A.V."/>
            <person name="Delcher A.L."/>
            <person name="Florea L."/>
            <person name="Kelley D.R."/>
            <person name="Schatz M.C."/>
            <person name="Puiu D."/>
            <person name="Hanrahan F."/>
            <person name="Pertea G."/>
            <person name="Van Tassell C.P."/>
            <person name="Sonstegard T.S."/>
            <person name="Marcais G."/>
            <person name="Roberts M."/>
            <person name="Subramanian P."/>
            <person name="Yorke J.A."/>
            <person name="Salzberg S.L."/>
        </authorList>
    </citation>
    <scope>NUCLEOTIDE SEQUENCE [LARGE SCALE GENOMIC DNA]</scope>
    <source>
        <strain>Hereford</strain>
    </source>
</reference>
<comment type="function">
    <text evidence="3">Inward rectifier potassium channels are characterized by a greater tendency to allow potassium to flow into the cell rather than out of it. Their voltage dependence is regulated by the concentration of extracellular potassium; as external potassium is raised, the voltage range of the channel opening shifts to more positive voltages. The inward rectification is mainly due to the blockage of outward current by internal magnesium. This receptor plays a crucial role in regulating the heartbeat. Can be blocked by external barium. This potassium channel is controlled by G proteins.</text>
</comment>
<comment type="catalytic activity">
    <reaction evidence="3">
        <text>K(+)(in) = K(+)(out)</text>
        <dbReference type="Rhea" id="RHEA:29463"/>
        <dbReference type="ChEBI" id="CHEBI:29103"/>
    </reaction>
</comment>
<comment type="activity regulation">
    <text evidence="3">Heteromultimer composed of KCNJ3/GIRK1 and KCNJ5/GIRK4 is activated by phosphatidylinositol 4,5 biphosphate (PtdIns(4,5)P2).</text>
</comment>
<comment type="subunit">
    <text evidence="3">Associates with KCNJ3/GIRK1 or KCNJ6/GIRK2 to form a G-protein-activated heteromultimer pore-forming unit. The resulting inward current is much larger.</text>
</comment>
<comment type="interaction">
    <interactant intactId="EBI-9973944">
        <id>F1MYR9</id>
    </interactant>
    <interactant intactId="EBI-9973959">
        <id>E1BNE9</id>
        <label>KCNJ3</label>
    </interactant>
    <organismsDiffer>false</organismsDiffer>
    <experiments>2</experiments>
</comment>
<comment type="subcellular location">
    <subcellularLocation>
        <location evidence="3">Membrane</location>
        <topology evidence="4">Multi-pass membrane protein</topology>
    </subcellularLocation>
</comment>
<comment type="similarity">
    <text evidence="6">Belongs to the inward rectifier-type potassium channel (TC 1.A.2.1) family. KCNJ5 subfamily.</text>
</comment>
<keyword id="KW-0407">Ion channel</keyword>
<keyword id="KW-0406">Ion transport</keyword>
<keyword id="KW-0472">Membrane</keyword>
<keyword id="KW-0597">Phosphoprotein</keyword>
<keyword id="KW-0630">Potassium</keyword>
<keyword id="KW-0633">Potassium transport</keyword>
<keyword id="KW-1185">Reference proteome</keyword>
<keyword id="KW-0812">Transmembrane</keyword>
<keyword id="KW-1133">Transmembrane helix</keyword>
<keyword id="KW-0813">Transport</keyword>
<keyword id="KW-0851">Voltage-gated channel</keyword>
<accession>F1MYR9</accession>
<sequence>MAGDSRNAMNQDMEIGVTPRDPKKIPKQARDYIPIATDRTRLLSEGKKPRQRYMEKSGKCNVHHGNVQETYRYLSDLFTTLVDLKWRFNLLVFTMVYTITWLFFGFIWWLIAYIRGDLDHVGDREWIPCVENLSGFVSAFLFSIETETTIGYGFRVITEKCPEGIVLLLVQAILGSIVNAFMVGCMFVKISQPKKRAETLMFSNNAVISLRDEKLCLMFRVGDLRNSHIVEASIRAKLIKSRQTKEGEFIPLNQTDINVGFDTGDDRLFLVSPLIICHEINEKSPFWEMSRAQLTQEEFEVVVILEGMVEATGMTCQARSSYMDTEVLWGHRFTPVLTLEKGFYEVDYNTFHDTYETNTPSCCAKELAEMKREGRLLQYHPSPPLPGGCVGAELGAEAEQEGEEEPEGLSGSQETKDSA</sequence>
<gene>
    <name type="primary">KCNJ5</name>
    <name type="synonym">GIRK4</name>
</gene>
<evidence type="ECO:0000250" key="1"/>
<evidence type="ECO:0000250" key="2">
    <source>
        <dbReference type="UniProtKB" id="P48542"/>
    </source>
</evidence>
<evidence type="ECO:0000250" key="3">
    <source>
        <dbReference type="UniProtKB" id="P48548"/>
    </source>
</evidence>
<evidence type="ECO:0000255" key="4"/>
<evidence type="ECO:0000256" key="5">
    <source>
        <dbReference type="SAM" id="MobiDB-lite"/>
    </source>
</evidence>
<evidence type="ECO:0000305" key="6"/>